<dbReference type="EC" id="3.4.25.2" evidence="1"/>
<dbReference type="EMBL" id="CP000768">
    <property type="protein sequence ID" value="ABS44298.1"/>
    <property type="molecule type" value="Genomic_DNA"/>
</dbReference>
<dbReference type="SMR" id="A7H4F1"/>
<dbReference type="KEGG" id="cjd:JJD26997_1336"/>
<dbReference type="HOGENOM" id="CLU_093872_1_1_7"/>
<dbReference type="Proteomes" id="UP000002302">
    <property type="component" value="Chromosome"/>
</dbReference>
<dbReference type="GO" id="GO:0009376">
    <property type="term" value="C:HslUV protease complex"/>
    <property type="evidence" value="ECO:0007669"/>
    <property type="project" value="UniProtKB-UniRule"/>
</dbReference>
<dbReference type="GO" id="GO:0005839">
    <property type="term" value="C:proteasome core complex"/>
    <property type="evidence" value="ECO:0007669"/>
    <property type="project" value="InterPro"/>
</dbReference>
<dbReference type="GO" id="GO:0046872">
    <property type="term" value="F:metal ion binding"/>
    <property type="evidence" value="ECO:0007669"/>
    <property type="project" value="UniProtKB-KW"/>
</dbReference>
<dbReference type="GO" id="GO:0004298">
    <property type="term" value="F:threonine-type endopeptidase activity"/>
    <property type="evidence" value="ECO:0007669"/>
    <property type="project" value="UniProtKB-KW"/>
</dbReference>
<dbReference type="GO" id="GO:0051603">
    <property type="term" value="P:proteolysis involved in protein catabolic process"/>
    <property type="evidence" value="ECO:0007669"/>
    <property type="project" value="InterPro"/>
</dbReference>
<dbReference type="CDD" id="cd01913">
    <property type="entry name" value="protease_HslV"/>
    <property type="match status" value="1"/>
</dbReference>
<dbReference type="Gene3D" id="3.60.20.10">
    <property type="entry name" value="Glutamine Phosphoribosylpyrophosphate, subunit 1, domain 1"/>
    <property type="match status" value="1"/>
</dbReference>
<dbReference type="HAMAP" id="MF_00248">
    <property type="entry name" value="HslV"/>
    <property type="match status" value="1"/>
</dbReference>
<dbReference type="InterPro" id="IPR022281">
    <property type="entry name" value="ATP-dep_Prtase_HsIV_su"/>
</dbReference>
<dbReference type="InterPro" id="IPR029055">
    <property type="entry name" value="Ntn_hydrolases_N"/>
</dbReference>
<dbReference type="InterPro" id="IPR001353">
    <property type="entry name" value="Proteasome_sua/b"/>
</dbReference>
<dbReference type="InterPro" id="IPR023333">
    <property type="entry name" value="Proteasome_suB-type"/>
</dbReference>
<dbReference type="NCBIfam" id="TIGR03692">
    <property type="entry name" value="ATP_dep_HslV"/>
    <property type="match status" value="1"/>
</dbReference>
<dbReference type="NCBIfam" id="NF003964">
    <property type="entry name" value="PRK05456.1"/>
    <property type="match status" value="1"/>
</dbReference>
<dbReference type="PANTHER" id="PTHR32194:SF0">
    <property type="entry name" value="ATP-DEPENDENT PROTEASE SUBUNIT HSLV"/>
    <property type="match status" value="1"/>
</dbReference>
<dbReference type="PANTHER" id="PTHR32194">
    <property type="entry name" value="METALLOPROTEASE TLDD"/>
    <property type="match status" value="1"/>
</dbReference>
<dbReference type="Pfam" id="PF00227">
    <property type="entry name" value="Proteasome"/>
    <property type="match status" value="1"/>
</dbReference>
<dbReference type="PIRSF" id="PIRSF039093">
    <property type="entry name" value="HslV"/>
    <property type="match status" value="1"/>
</dbReference>
<dbReference type="SUPFAM" id="SSF56235">
    <property type="entry name" value="N-terminal nucleophile aminohydrolases (Ntn hydrolases)"/>
    <property type="match status" value="1"/>
</dbReference>
<dbReference type="PROSITE" id="PS51476">
    <property type="entry name" value="PROTEASOME_BETA_2"/>
    <property type="match status" value="1"/>
</dbReference>
<organism>
    <name type="scientific">Campylobacter jejuni subsp. doylei (strain ATCC BAA-1458 / RM4099 / 269.97)</name>
    <dbReference type="NCBI Taxonomy" id="360109"/>
    <lineage>
        <taxon>Bacteria</taxon>
        <taxon>Pseudomonadati</taxon>
        <taxon>Campylobacterota</taxon>
        <taxon>Epsilonproteobacteria</taxon>
        <taxon>Campylobacterales</taxon>
        <taxon>Campylobacteraceae</taxon>
        <taxon>Campylobacter</taxon>
    </lineage>
</organism>
<comment type="function">
    <text evidence="1">Protease subunit of a proteasome-like degradation complex believed to be a general protein degrading machinery.</text>
</comment>
<comment type="catalytic activity">
    <reaction evidence="1">
        <text>ATP-dependent cleavage of peptide bonds with broad specificity.</text>
        <dbReference type="EC" id="3.4.25.2"/>
    </reaction>
</comment>
<comment type="activity regulation">
    <text evidence="1">Allosterically activated by HslU binding.</text>
</comment>
<comment type="subunit">
    <text evidence="1">A double ring-shaped homohexamer of HslV is capped on each side by a ring-shaped HslU homohexamer. The assembly of the HslU/HslV complex is dependent on binding of ATP.</text>
</comment>
<comment type="subcellular location">
    <subcellularLocation>
        <location evidence="1">Cytoplasm</location>
    </subcellularLocation>
</comment>
<comment type="similarity">
    <text evidence="1">Belongs to the peptidase T1B family. HslV subfamily.</text>
</comment>
<sequence>MFHATTILAYKGKNKSVIGGDGQVSFGNTVLKGNAIKIRKLNNGKVLAGFAGSTADAFNLFDMFENLLQSSKGDLLKAAIDFSKEWRKDKYLRKLEAMMLVLDRNHIFLLSGTGDVVEPEDGQIAAIGSGGNYALSAARALAKHANLDEEELVKSSLQIAGEICIYTNTNIKTYVIEDEK</sequence>
<feature type="chain" id="PRO_1000012599" description="ATP-dependent protease subunit HslV">
    <location>
        <begin position="1"/>
        <end position="180"/>
    </location>
</feature>
<feature type="active site" evidence="1">
    <location>
        <position position="5"/>
    </location>
</feature>
<feature type="binding site" evidence="1">
    <location>
        <position position="161"/>
    </location>
    <ligand>
        <name>Na(+)</name>
        <dbReference type="ChEBI" id="CHEBI:29101"/>
    </ligand>
</feature>
<feature type="binding site" evidence="1">
    <location>
        <position position="164"/>
    </location>
    <ligand>
        <name>Na(+)</name>
        <dbReference type="ChEBI" id="CHEBI:29101"/>
    </ligand>
</feature>
<feature type="binding site" evidence="1">
    <location>
        <position position="167"/>
    </location>
    <ligand>
        <name>Na(+)</name>
        <dbReference type="ChEBI" id="CHEBI:29101"/>
    </ligand>
</feature>
<keyword id="KW-0021">Allosteric enzyme</keyword>
<keyword id="KW-0963">Cytoplasm</keyword>
<keyword id="KW-0378">Hydrolase</keyword>
<keyword id="KW-0479">Metal-binding</keyword>
<keyword id="KW-0645">Protease</keyword>
<keyword id="KW-0915">Sodium</keyword>
<keyword id="KW-0888">Threonine protease</keyword>
<evidence type="ECO:0000255" key="1">
    <source>
        <dbReference type="HAMAP-Rule" id="MF_00248"/>
    </source>
</evidence>
<accession>A7H4F1</accession>
<reference key="1">
    <citation type="submission" date="2007-07" db="EMBL/GenBank/DDBJ databases">
        <title>Complete genome sequence of Campylobacter jejuni subsp doylei 269.97 isolated from human blood.</title>
        <authorList>
            <person name="Fouts D.E."/>
            <person name="Mongodin E.F."/>
            <person name="Puiu D."/>
            <person name="Sebastian Y."/>
            <person name="Miller W.G."/>
            <person name="Mandrell R.E."/>
            <person name="Lastovica A.J."/>
            <person name="Nelson K.E."/>
        </authorList>
    </citation>
    <scope>NUCLEOTIDE SEQUENCE [LARGE SCALE GENOMIC DNA]</scope>
    <source>
        <strain>ATCC BAA-1458 / RM4099 / 269.97</strain>
    </source>
</reference>
<protein>
    <recommendedName>
        <fullName evidence="1">ATP-dependent protease subunit HslV</fullName>
        <ecNumber evidence="1">3.4.25.2</ecNumber>
    </recommendedName>
</protein>
<proteinExistence type="inferred from homology"/>
<name>HSLV_CAMJD</name>
<gene>
    <name evidence="1" type="primary">hslV</name>
    <name type="ordered locus">JJD26997_1336</name>
</gene>